<evidence type="ECO:0000250" key="1">
    <source>
        <dbReference type="UniProtKB" id="P56761"/>
    </source>
</evidence>
<evidence type="ECO:0000255" key="2">
    <source>
        <dbReference type="HAMAP-Rule" id="MF_01383"/>
    </source>
</evidence>
<reference key="1">
    <citation type="journal article" date="2006" name="Plant Cell Rep.">
        <title>The complete chloroplast genome sequences of Solanum tuberosum and comparative analysis with Solanaceae species identified the presence of a 241-bp deletion in cultivated potato chloroplast DNA sequence.</title>
        <authorList>
            <person name="Chung H.-J."/>
            <person name="Jung J.D."/>
            <person name="Park H.-W."/>
            <person name="Kim J.-H."/>
            <person name="Cha H.W."/>
            <person name="Min S.R."/>
            <person name="Jeong W.-J."/>
            <person name="Liu J.R."/>
        </authorList>
    </citation>
    <scope>NUCLEOTIDE SEQUENCE [LARGE SCALE GENOMIC DNA]</scope>
    <source>
        <strain>cv. Desiree</strain>
    </source>
</reference>
<reference key="2">
    <citation type="submission" date="2006-02" db="EMBL/GenBank/DDBJ databases">
        <title>Complete chloroplast genome sequences of Solanum tuberosum cultivar Desiree and comparative analyses with other Solanaceae genomes.</title>
        <authorList>
            <person name="Gargano D."/>
            <person name="Scotti N."/>
            <person name="Vezzi A."/>
            <person name="Bilardi A."/>
            <person name="Valle G."/>
            <person name="Grillo S."/>
            <person name="Cardi T."/>
        </authorList>
    </citation>
    <scope>NUCLEOTIDE SEQUENCE [LARGE SCALE GENOMIC DNA]</scope>
    <source>
        <strain>cv. Desiree</strain>
    </source>
</reference>
<organism>
    <name type="scientific">Solanum tuberosum</name>
    <name type="common">Potato</name>
    <dbReference type="NCBI Taxonomy" id="4113"/>
    <lineage>
        <taxon>Eukaryota</taxon>
        <taxon>Viridiplantae</taxon>
        <taxon>Streptophyta</taxon>
        <taxon>Embryophyta</taxon>
        <taxon>Tracheophyta</taxon>
        <taxon>Spermatophyta</taxon>
        <taxon>Magnoliopsida</taxon>
        <taxon>eudicotyledons</taxon>
        <taxon>Gunneridae</taxon>
        <taxon>Pentapetalae</taxon>
        <taxon>asterids</taxon>
        <taxon>lamiids</taxon>
        <taxon>Solanales</taxon>
        <taxon>Solanaceae</taxon>
        <taxon>Solanoideae</taxon>
        <taxon>Solaneae</taxon>
        <taxon>Solanum</taxon>
    </lineage>
</organism>
<comment type="function">
    <text evidence="2">Photosystem II (PSII) is a light-driven water:plastoquinone oxidoreductase that uses light energy to abstract electrons from H(2)O, generating O(2) and a proton gradient subsequently used for ATP formation. It consists of a core antenna complex that captures photons, and an electron transfer chain that converts photonic excitation into a charge separation. The D1/D2 (PsbA/PsbD) reaction center heterodimer binds P680, the primary electron donor of PSII as well as several subsequent electron acceptors. D2 is needed for assembly of a stable PSII complex.</text>
</comment>
<comment type="catalytic activity">
    <reaction evidence="2">
        <text>2 a plastoquinone + 4 hnu + 2 H2O = 2 a plastoquinol + O2</text>
        <dbReference type="Rhea" id="RHEA:36359"/>
        <dbReference type="Rhea" id="RHEA-COMP:9561"/>
        <dbReference type="Rhea" id="RHEA-COMP:9562"/>
        <dbReference type="ChEBI" id="CHEBI:15377"/>
        <dbReference type="ChEBI" id="CHEBI:15379"/>
        <dbReference type="ChEBI" id="CHEBI:17757"/>
        <dbReference type="ChEBI" id="CHEBI:30212"/>
        <dbReference type="ChEBI" id="CHEBI:62192"/>
        <dbReference type="EC" id="1.10.3.9"/>
    </reaction>
</comment>
<comment type="cofactor">
    <text evidence="2">The D1/D2 heterodimer binds P680, chlorophylls that are the primary electron donor of PSII, and subsequent electron acceptors. It shares a non-heme iron and each subunit binds pheophytin, quinone, additional chlorophylls, carotenoids and lipids. There is also a Cl(-1) ion associated with D1 and D2, which is required for oxygen evolution. The PSII complex binds additional chlorophylls, carotenoids and specific lipids.</text>
</comment>
<comment type="subunit">
    <text evidence="2">PSII is composed of 1 copy each of membrane proteins PsbA, PsbB, PsbC, PsbD, PsbE, PsbF, PsbH, PsbI, PsbJ, PsbK, PsbL, PsbM, PsbT, PsbX, PsbY, PsbZ, Psb30/Ycf12, at least 3 peripheral proteins of the oxygen-evolving complex and a large number of cofactors. It forms dimeric complexes.</text>
</comment>
<comment type="subcellular location">
    <subcellularLocation>
        <location evidence="2">Plastid</location>
        <location evidence="2">Chloroplast thylakoid membrane</location>
        <topology evidence="2">Multi-pass membrane protein</topology>
    </subcellularLocation>
</comment>
<comment type="miscellaneous">
    <text evidence="2">2 of the reaction center chlorophylls (ChlD1 and ChlD2) are entirely coordinated by water.</text>
</comment>
<comment type="similarity">
    <text evidence="2">Belongs to the reaction center PufL/M/PsbA/D family.</text>
</comment>
<keyword id="KW-0007">Acetylation</keyword>
<keyword id="KW-0148">Chlorophyll</keyword>
<keyword id="KW-0150">Chloroplast</keyword>
<keyword id="KW-0157">Chromophore</keyword>
<keyword id="KW-0249">Electron transport</keyword>
<keyword id="KW-0408">Iron</keyword>
<keyword id="KW-0460">Magnesium</keyword>
<keyword id="KW-0472">Membrane</keyword>
<keyword id="KW-0479">Metal-binding</keyword>
<keyword id="KW-0560">Oxidoreductase</keyword>
<keyword id="KW-0597">Phosphoprotein</keyword>
<keyword id="KW-0602">Photosynthesis</keyword>
<keyword id="KW-0604">Photosystem II</keyword>
<keyword id="KW-0934">Plastid</keyword>
<keyword id="KW-1185">Reference proteome</keyword>
<keyword id="KW-0793">Thylakoid</keyword>
<keyword id="KW-0812">Transmembrane</keyword>
<keyword id="KW-1133">Transmembrane helix</keyword>
<keyword id="KW-0813">Transport</keyword>
<proteinExistence type="inferred from homology"/>
<geneLocation type="chloroplast"/>
<sequence>MTIAIGKFTKDENDLFDIMDDWLRRDRFVFVGWSGLLLFPCAYFAVGGWFTGTTFVTSWYTHGLASSYLEGCNFLTAAVSTPANSLAHSLLLLWGPEAQGDFTRWCQLGGLWTFVALHGAFGLIGFMLRQFELARSVQLRPYNAIAFSGPIAVFVSVFLIYPLGQSGWFFAPSFGVAAIFRFILFFQGFHNWTLNPFHMMGVAGVLGAALLCAIHGATVENTLFEDGDGANTFRAFNPTQAEETYSMVTANRFWSQIFGVAFSNKRWLHFFMLFVPVTGLWMSALGVVGLALNLRAYDFVSQEIRAAEDPEFETFYTKNILLNEGIRAWMAAQDQPHENLIFPEEVLPRGNAL</sequence>
<dbReference type="EC" id="1.10.3.9" evidence="2"/>
<dbReference type="EMBL" id="DQ231562">
    <property type="protein sequence ID" value="ABB90038.1"/>
    <property type="molecule type" value="Genomic_DNA"/>
</dbReference>
<dbReference type="EMBL" id="DQ386163">
    <property type="protein sequence ID" value="ABD47052.1"/>
    <property type="molecule type" value="Genomic_DNA"/>
</dbReference>
<dbReference type="RefSeq" id="YP_635634.1">
    <property type="nucleotide sequence ID" value="NC_008096.2"/>
</dbReference>
<dbReference type="SMR" id="Q2VEI1"/>
<dbReference type="FunCoup" id="Q2VEI1">
    <property type="interactions" value="379"/>
</dbReference>
<dbReference type="STRING" id="4113.Q2VEI1"/>
<dbReference type="PaxDb" id="4113-PGSC0003DMT400044462"/>
<dbReference type="GeneID" id="4099961"/>
<dbReference type="KEGG" id="sot:4099961"/>
<dbReference type="eggNOG" id="ENOG502QWJF">
    <property type="taxonomic scope" value="Eukaryota"/>
</dbReference>
<dbReference type="InParanoid" id="Q2VEI1"/>
<dbReference type="OrthoDB" id="1247798at2759"/>
<dbReference type="Proteomes" id="UP000011115">
    <property type="component" value="Unassembled WGS sequence"/>
</dbReference>
<dbReference type="GO" id="GO:0009535">
    <property type="term" value="C:chloroplast thylakoid membrane"/>
    <property type="evidence" value="ECO:0007669"/>
    <property type="project" value="UniProtKB-SubCell"/>
</dbReference>
<dbReference type="GO" id="GO:0009523">
    <property type="term" value="C:photosystem II"/>
    <property type="evidence" value="ECO:0000318"/>
    <property type="project" value="GO_Central"/>
</dbReference>
<dbReference type="GO" id="GO:0016168">
    <property type="term" value="F:chlorophyll binding"/>
    <property type="evidence" value="ECO:0007669"/>
    <property type="project" value="UniProtKB-UniRule"/>
</dbReference>
<dbReference type="GO" id="GO:0045156">
    <property type="term" value="F:electron transporter, transferring electrons within the cyclic electron transport pathway of photosynthesis activity"/>
    <property type="evidence" value="ECO:0007669"/>
    <property type="project" value="InterPro"/>
</dbReference>
<dbReference type="GO" id="GO:0005506">
    <property type="term" value="F:iron ion binding"/>
    <property type="evidence" value="ECO:0007669"/>
    <property type="project" value="UniProtKB-UniRule"/>
</dbReference>
<dbReference type="GO" id="GO:0010242">
    <property type="term" value="F:oxygen evolving activity"/>
    <property type="evidence" value="ECO:0007669"/>
    <property type="project" value="UniProtKB-EC"/>
</dbReference>
<dbReference type="GO" id="GO:0009772">
    <property type="term" value="P:photosynthetic electron transport in photosystem II"/>
    <property type="evidence" value="ECO:0007669"/>
    <property type="project" value="InterPro"/>
</dbReference>
<dbReference type="CDD" id="cd09288">
    <property type="entry name" value="Photosystem-II_D2"/>
    <property type="match status" value="1"/>
</dbReference>
<dbReference type="FunFam" id="1.20.85.10:FF:000001">
    <property type="entry name" value="photosystem II D2 protein-like"/>
    <property type="match status" value="1"/>
</dbReference>
<dbReference type="Gene3D" id="1.20.85.10">
    <property type="entry name" value="Photosystem II protein D1-like"/>
    <property type="match status" value="1"/>
</dbReference>
<dbReference type="HAMAP" id="MF_01383">
    <property type="entry name" value="PSII_PsbD_D2"/>
    <property type="match status" value="1"/>
</dbReference>
<dbReference type="InterPro" id="IPR055266">
    <property type="entry name" value="D1/D2"/>
</dbReference>
<dbReference type="InterPro" id="IPR036854">
    <property type="entry name" value="Photo_II_D1/D2_sf"/>
</dbReference>
<dbReference type="InterPro" id="IPR000484">
    <property type="entry name" value="Photo_RC_L/M"/>
</dbReference>
<dbReference type="InterPro" id="IPR055265">
    <property type="entry name" value="Photo_RC_L/M_CS"/>
</dbReference>
<dbReference type="InterPro" id="IPR005868">
    <property type="entry name" value="PSII_PsbD/D2"/>
</dbReference>
<dbReference type="NCBIfam" id="TIGR01152">
    <property type="entry name" value="psbD"/>
    <property type="match status" value="1"/>
</dbReference>
<dbReference type="PANTHER" id="PTHR33149:SF12">
    <property type="entry name" value="PHOTOSYSTEM II D2 PROTEIN"/>
    <property type="match status" value="1"/>
</dbReference>
<dbReference type="PANTHER" id="PTHR33149">
    <property type="entry name" value="PHOTOSYSTEM II PROTEIN D1"/>
    <property type="match status" value="1"/>
</dbReference>
<dbReference type="Pfam" id="PF00124">
    <property type="entry name" value="Photo_RC"/>
    <property type="match status" value="1"/>
</dbReference>
<dbReference type="PRINTS" id="PR00256">
    <property type="entry name" value="REACTNCENTRE"/>
</dbReference>
<dbReference type="SUPFAM" id="SSF81483">
    <property type="entry name" value="Bacterial photosystem II reaction centre, L and M subunits"/>
    <property type="match status" value="1"/>
</dbReference>
<dbReference type="PROSITE" id="PS00244">
    <property type="entry name" value="REACTION_CENTER"/>
    <property type="match status" value="1"/>
</dbReference>
<name>PSBD_SOLTU</name>
<protein>
    <recommendedName>
        <fullName evidence="2">Photosystem II D2 protein</fullName>
        <shortName evidence="2">PSII D2 protein</shortName>
        <ecNumber evidence="2">1.10.3.9</ecNumber>
    </recommendedName>
    <alternativeName>
        <fullName evidence="2">Photosystem Q(A) protein</fullName>
    </alternativeName>
</protein>
<feature type="initiator methionine" description="Removed" evidence="1">
    <location>
        <position position="1"/>
    </location>
</feature>
<feature type="chain" id="PRO_0000277566" description="Photosystem II D2 protein">
    <location>
        <begin position="2"/>
        <end position="353"/>
    </location>
</feature>
<feature type="transmembrane region" description="Helical" evidence="2">
    <location>
        <begin position="41"/>
        <end position="61"/>
    </location>
</feature>
<feature type="transmembrane region" description="Helical" evidence="2">
    <location>
        <begin position="125"/>
        <end position="141"/>
    </location>
</feature>
<feature type="transmembrane region" description="Helical" evidence="2">
    <location>
        <begin position="153"/>
        <end position="166"/>
    </location>
</feature>
<feature type="transmembrane region" description="Helical" evidence="2">
    <location>
        <begin position="208"/>
        <end position="228"/>
    </location>
</feature>
<feature type="transmembrane region" description="Helical" evidence="2">
    <location>
        <begin position="279"/>
        <end position="295"/>
    </location>
</feature>
<feature type="binding site" description="axial binding residue" evidence="2">
    <location>
        <position position="118"/>
    </location>
    <ligand>
        <name>chlorophyll a</name>
        <dbReference type="ChEBI" id="CHEBI:58416"/>
        <label>ChlzD2</label>
    </ligand>
    <ligandPart>
        <name>Mg</name>
        <dbReference type="ChEBI" id="CHEBI:25107"/>
    </ligandPart>
</feature>
<feature type="binding site" evidence="2">
    <location>
        <position position="130"/>
    </location>
    <ligand>
        <name>pheophytin a</name>
        <dbReference type="ChEBI" id="CHEBI:136840"/>
        <label>D2</label>
    </ligand>
</feature>
<feature type="binding site" evidence="2">
    <location>
        <position position="143"/>
    </location>
    <ligand>
        <name>pheophytin a</name>
        <dbReference type="ChEBI" id="CHEBI:136840"/>
        <label>D2</label>
    </ligand>
</feature>
<feature type="binding site" description="axial binding residue" evidence="2">
    <location>
        <position position="198"/>
    </location>
    <ligand>
        <name>chlorophyll a</name>
        <dbReference type="ChEBI" id="CHEBI:58416"/>
        <label>PD2</label>
    </ligand>
    <ligandPart>
        <name>Mg</name>
        <dbReference type="ChEBI" id="CHEBI:25107"/>
    </ligandPart>
</feature>
<feature type="binding site" evidence="2">
    <location>
        <position position="215"/>
    </location>
    <ligand>
        <name>a plastoquinone</name>
        <dbReference type="ChEBI" id="CHEBI:17757"/>
        <label>Q(A)</label>
    </ligand>
</feature>
<feature type="binding site" evidence="2">
    <location>
        <position position="215"/>
    </location>
    <ligand>
        <name>Fe cation</name>
        <dbReference type="ChEBI" id="CHEBI:24875"/>
        <note>ligand shared with heterodimeric partner</note>
    </ligand>
</feature>
<feature type="binding site" evidence="2">
    <location>
        <position position="262"/>
    </location>
    <ligand>
        <name>a plastoquinone</name>
        <dbReference type="ChEBI" id="CHEBI:17757"/>
        <label>Q(A)</label>
    </ligand>
</feature>
<feature type="binding site" evidence="2">
    <location>
        <position position="269"/>
    </location>
    <ligand>
        <name>Fe cation</name>
        <dbReference type="ChEBI" id="CHEBI:24875"/>
        <note>ligand shared with heterodimeric partner</note>
    </ligand>
</feature>
<feature type="modified residue" description="N-acetylthreonine" evidence="1">
    <location>
        <position position="2"/>
    </location>
</feature>
<feature type="modified residue" description="Phosphothreonine" evidence="1">
    <location>
        <position position="2"/>
    </location>
</feature>
<gene>
    <name evidence="2" type="primary">psbD</name>
</gene>
<accession>Q2VEI1</accession>